<reference key="1">
    <citation type="submission" date="2005-10" db="EMBL/GenBank/DDBJ databases">
        <authorList>
            <consortium name="NIH - Xenopus Gene Collection (XGC) project"/>
        </authorList>
    </citation>
    <scope>NUCLEOTIDE SEQUENCE [LARGE SCALE MRNA]</scope>
    <source>
        <tissue>Testis</tissue>
    </source>
</reference>
<comment type="function">
    <text evidence="1">Component of the Mediator complex, a coactivator involved in the regulated transcription of nearly all RNA polymerase II-dependent genes. Mediator functions as a bridge to convey information from gene-specific regulatory proteins to the basal RNA polymerase II transcription machinery. Mediator is recruited to promoters by direct interactions with regulatory proteins and serves as a scaffold for the assembly of a functional preinitiation complex with RNA polymerase II and the general transcription factors (By similarity).</text>
</comment>
<comment type="subunit">
    <text evidence="1">Component of the Mediator complex.</text>
</comment>
<comment type="subcellular location">
    <subcellularLocation>
        <location evidence="1">Nucleus</location>
    </subcellularLocation>
</comment>
<comment type="similarity">
    <text evidence="2">Belongs to the Mediator complex subunit 7 family.</text>
</comment>
<organism>
    <name type="scientific">Xenopus laevis</name>
    <name type="common">African clawed frog</name>
    <dbReference type="NCBI Taxonomy" id="8355"/>
    <lineage>
        <taxon>Eukaryota</taxon>
        <taxon>Metazoa</taxon>
        <taxon>Chordata</taxon>
        <taxon>Craniata</taxon>
        <taxon>Vertebrata</taxon>
        <taxon>Euteleostomi</taxon>
        <taxon>Amphibia</taxon>
        <taxon>Batrachia</taxon>
        <taxon>Anura</taxon>
        <taxon>Pipoidea</taxon>
        <taxon>Pipidae</taxon>
        <taxon>Xenopodinae</taxon>
        <taxon>Xenopus</taxon>
        <taxon>Xenopus</taxon>
    </lineage>
</organism>
<evidence type="ECO:0000250" key="1"/>
<evidence type="ECO:0000305" key="2"/>
<keyword id="KW-0010">Activator</keyword>
<keyword id="KW-0539">Nucleus</keyword>
<keyword id="KW-1185">Reference proteome</keyword>
<keyword id="KW-0804">Transcription</keyword>
<keyword id="KW-0805">Transcription regulation</keyword>
<name>MED7A_XENLA</name>
<accession>Q3B8I4</accession>
<protein>
    <recommendedName>
        <fullName>Mediator of RNA polymerase II transcription subunit 7-A</fullName>
    </recommendedName>
    <alternativeName>
        <fullName>Cofactor required for Sp1 transcriptional activation subunit 9-A</fullName>
        <shortName>CRSP complex subunit 9-A</shortName>
    </alternativeName>
    <alternativeName>
        <fullName>Mediator complex subunit 7-A</fullName>
    </alternativeName>
</protein>
<gene>
    <name type="primary">med7-a</name>
    <name type="synonym">crsp9-a</name>
</gene>
<sequence length="228" mass="26299">MGEPQQVSALPIPPMQYIKEYTDENIRKSLAPKPPVPIKDSYMMFGNQFQCDDLIIRPLETQGIERLHPVQFDHKKELRKLLMSILVNFLDMLDILIRSPGSIRREEKLEDLKLLFVHMHHLINEYRPHQARETLRVMMEVQKRQRLETAERFQKHLERVVEMIQNCLASLPDDLPLPDGTVSVKTEPMDVQEPCTDHHEGPQGAAASVKEATIDKDAAMCGIIDEMT</sequence>
<feature type="chain" id="PRO_0000303182" description="Mediator of RNA polymerase II transcription subunit 7-A">
    <location>
        <begin position="1"/>
        <end position="228"/>
    </location>
</feature>
<proteinExistence type="evidence at transcript level"/>
<dbReference type="EMBL" id="BC106352">
    <property type="protein sequence ID" value="AAI06353.1"/>
    <property type="molecule type" value="mRNA"/>
</dbReference>
<dbReference type="RefSeq" id="NP_001089696.1">
    <property type="nucleotide sequence ID" value="NM_001096227.1"/>
</dbReference>
<dbReference type="RefSeq" id="XP_018106737.1">
    <property type="nucleotide sequence ID" value="XM_018251248.1"/>
</dbReference>
<dbReference type="RefSeq" id="XP_018106739.1">
    <property type="nucleotide sequence ID" value="XM_018251250.1"/>
</dbReference>
<dbReference type="SMR" id="Q3B8I4"/>
<dbReference type="DNASU" id="734758"/>
<dbReference type="GeneID" id="734758"/>
<dbReference type="KEGG" id="xla:734758"/>
<dbReference type="AGR" id="Xenbase:XB-GENE-922723"/>
<dbReference type="CTD" id="734758"/>
<dbReference type="Xenbase" id="XB-GENE-922723">
    <property type="gene designation" value="med7.L"/>
</dbReference>
<dbReference type="OrthoDB" id="10253553at2759"/>
<dbReference type="Proteomes" id="UP000186698">
    <property type="component" value="Chromosome 3L"/>
</dbReference>
<dbReference type="Bgee" id="734758">
    <property type="expression patterns" value="Expressed in oocyte and 19 other cell types or tissues"/>
</dbReference>
<dbReference type="GO" id="GO:0016592">
    <property type="term" value="C:mediator complex"/>
    <property type="evidence" value="ECO:0007669"/>
    <property type="project" value="InterPro"/>
</dbReference>
<dbReference type="GO" id="GO:0003712">
    <property type="term" value="F:transcription coregulator activity"/>
    <property type="evidence" value="ECO:0007669"/>
    <property type="project" value="InterPro"/>
</dbReference>
<dbReference type="GO" id="GO:0006357">
    <property type="term" value="P:regulation of transcription by RNA polymerase II"/>
    <property type="evidence" value="ECO:0007669"/>
    <property type="project" value="InterPro"/>
</dbReference>
<dbReference type="Gene3D" id="6.10.140.200">
    <property type="match status" value="1"/>
</dbReference>
<dbReference type="InterPro" id="IPR051669">
    <property type="entry name" value="Immune_Mod/Transcr_Coactivator"/>
</dbReference>
<dbReference type="InterPro" id="IPR037212">
    <property type="entry name" value="Med7/Med21-like"/>
</dbReference>
<dbReference type="InterPro" id="IPR009244">
    <property type="entry name" value="Mediatior_Med7"/>
</dbReference>
<dbReference type="InterPro" id="IPR044888">
    <property type="entry name" value="Mediatior_Med7_sf"/>
</dbReference>
<dbReference type="PANTHER" id="PTHR15498:SF72">
    <property type="entry name" value="MEDIATOR OF RNA POLYMERASE II TRANSCRIPTION SUBUNIT 7"/>
    <property type="match status" value="1"/>
</dbReference>
<dbReference type="PANTHER" id="PTHR15498">
    <property type="entry name" value="T-CELL IMMUNOGLOBULIN AND MUCIN DOMAIN CONTAINING TIM"/>
    <property type="match status" value="1"/>
</dbReference>
<dbReference type="Pfam" id="PF05983">
    <property type="entry name" value="Med7"/>
    <property type="match status" value="1"/>
</dbReference>
<dbReference type="SUPFAM" id="SSF140718">
    <property type="entry name" value="Mediator hinge subcomplex-like"/>
    <property type="match status" value="1"/>
</dbReference>